<comment type="function">
    <text>Involved in oxygen transport from the lung to the various peripheral tissues.</text>
</comment>
<comment type="subunit">
    <text>Heterotetramer of two alpha chains and two beta chains.</text>
</comment>
<comment type="tissue specificity">
    <text>Red blood cells.</text>
</comment>
<comment type="similarity">
    <text evidence="1">Belongs to the globin family.</text>
</comment>
<reference key="1">
    <citation type="journal article" date="1985" name="Biol. Chem. Hoppe-Seyler">
        <title>The primary structure of the hemoglobin of the dogfish shark (Squalus acanthias). Antagonistic effects of ATP and urea on oxygen affinity of an elasmobranch hemoglobin.</title>
        <authorList>
            <person name="Aschauer H."/>
            <person name="Weber R.E."/>
            <person name="Braunitzer G."/>
        </authorList>
    </citation>
    <scope>PROTEIN SEQUENCE</scope>
</reference>
<sequence>VLSAADKTAIKHLTGSLRTNAEAWGAESLARMFATTPSTKTYFSKFTDFSANGKRVKAHGGKVLNAVADATDHLDNVAGHLDPLAVLHGTTLCVDPHNFPLLTQCILVTLAAHLTELKPETHCALDKFLCEVATALGSHYR</sequence>
<evidence type="ECO:0000255" key="1">
    <source>
        <dbReference type="PROSITE-ProRule" id="PRU00238"/>
    </source>
</evidence>
<dbReference type="PIR" id="A24653">
    <property type="entry name" value="A24653"/>
</dbReference>
<dbReference type="SMR" id="P07408"/>
<dbReference type="GO" id="GO:0072562">
    <property type="term" value="C:blood microparticle"/>
    <property type="evidence" value="ECO:0007669"/>
    <property type="project" value="TreeGrafter"/>
</dbReference>
<dbReference type="GO" id="GO:0031838">
    <property type="term" value="C:haptoglobin-hemoglobin complex"/>
    <property type="evidence" value="ECO:0007669"/>
    <property type="project" value="TreeGrafter"/>
</dbReference>
<dbReference type="GO" id="GO:0005833">
    <property type="term" value="C:hemoglobin complex"/>
    <property type="evidence" value="ECO:0007669"/>
    <property type="project" value="InterPro"/>
</dbReference>
<dbReference type="GO" id="GO:0031720">
    <property type="term" value="F:haptoglobin binding"/>
    <property type="evidence" value="ECO:0007669"/>
    <property type="project" value="TreeGrafter"/>
</dbReference>
<dbReference type="GO" id="GO:0020037">
    <property type="term" value="F:heme binding"/>
    <property type="evidence" value="ECO:0007669"/>
    <property type="project" value="InterPro"/>
</dbReference>
<dbReference type="GO" id="GO:0046872">
    <property type="term" value="F:metal ion binding"/>
    <property type="evidence" value="ECO:0007669"/>
    <property type="project" value="UniProtKB-KW"/>
</dbReference>
<dbReference type="GO" id="GO:0043177">
    <property type="term" value="F:organic acid binding"/>
    <property type="evidence" value="ECO:0007669"/>
    <property type="project" value="TreeGrafter"/>
</dbReference>
<dbReference type="GO" id="GO:0019825">
    <property type="term" value="F:oxygen binding"/>
    <property type="evidence" value="ECO:0007669"/>
    <property type="project" value="InterPro"/>
</dbReference>
<dbReference type="GO" id="GO:0005344">
    <property type="term" value="F:oxygen carrier activity"/>
    <property type="evidence" value="ECO:0007669"/>
    <property type="project" value="UniProtKB-KW"/>
</dbReference>
<dbReference type="GO" id="GO:0004601">
    <property type="term" value="F:peroxidase activity"/>
    <property type="evidence" value="ECO:0007669"/>
    <property type="project" value="TreeGrafter"/>
</dbReference>
<dbReference type="GO" id="GO:0042744">
    <property type="term" value="P:hydrogen peroxide catabolic process"/>
    <property type="evidence" value="ECO:0007669"/>
    <property type="project" value="TreeGrafter"/>
</dbReference>
<dbReference type="CDD" id="cd08927">
    <property type="entry name" value="Hb-alpha-like"/>
    <property type="match status" value="1"/>
</dbReference>
<dbReference type="FunFam" id="1.10.490.10:FF:000002">
    <property type="entry name" value="Hemoglobin subunit alpha"/>
    <property type="match status" value="1"/>
</dbReference>
<dbReference type="Gene3D" id="1.10.490.10">
    <property type="entry name" value="Globins"/>
    <property type="match status" value="1"/>
</dbReference>
<dbReference type="InterPro" id="IPR000971">
    <property type="entry name" value="Globin"/>
</dbReference>
<dbReference type="InterPro" id="IPR009050">
    <property type="entry name" value="Globin-like_sf"/>
</dbReference>
<dbReference type="InterPro" id="IPR012292">
    <property type="entry name" value="Globin/Proto"/>
</dbReference>
<dbReference type="InterPro" id="IPR002338">
    <property type="entry name" value="Hemoglobin_a-typ"/>
</dbReference>
<dbReference type="InterPro" id="IPR050056">
    <property type="entry name" value="Hemoglobin_oxygen_transport"/>
</dbReference>
<dbReference type="PANTHER" id="PTHR11442">
    <property type="entry name" value="HEMOGLOBIN FAMILY MEMBER"/>
    <property type="match status" value="1"/>
</dbReference>
<dbReference type="PANTHER" id="PTHR11442:SF48">
    <property type="entry name" value="HEMOGLOBIN SUBUNIT ALPHA"/>
    <property type="match status" value="1"/>
</dbReference>
<dbReference type="Pfam" id="PF00042">
    <property type="entry name" value="Globin"/>
    <property type="match status" value="1"/>
</dbReference>
<dbReference type="PRINTS" id="PR00612">
    <property type="entry name" value="ALPHAHAEM"/>
</dbReference>
<dbReference type="SUPFAM" id="SSF46458">
    <property type="entry name" value="Globin-like"/>
    <property type="match status" value="1"/>
</dbReference>
<dbReference type="PROSITE" id="PS01033">
    <property type="entry name" value="GLOBIN"/>
    <property type="match status" value="1"/>
</dbReference>
<gene>
    <name type="primary">HBA</name>
</gene>
<name>HBA_SQUAC</name>
<organism>
    <name type="scientific">Squalus acanthias</name>
    <name type="common">Spiny dogfish</name>
    <dbReference type="NCBI Taxonomy" id="7797"/>
    <lineage>
        <taxon>Eukaryota</taxon>
        <taxon>Metazoa</taxon>
        <taxon>Chordata</taxon>
        <taxon>Craniata</taxon>
        <taxon>Vertebrata</taxon>
        <taxon>Chondrichthyes</taxon>
        <taxon>Elasmobranchii</taxon>
        <taxon>Squalomorphii</taxon>
        <taxon>Squaliformes</taxon>
        <taxon>Squalidae</taxon>
        <taxon>Squalus</taxon>
    </lineage>
</organism>
<proteinExistence type="evidence at protein level"/>
<feature type="chain" id="PRO_0000052768" description="Hemoglobin subunit alpha">
    <location>
        <begin position="1"/>
        <end position="141"/>
    </location>
</feature>
<feature type="domain" description="Globin" evidence="1">
    <location>
        <begin position="1"/>
        <end position="141"/>
    </location>
</feature>
<feature type="binding site" evidence="1">
    <location>
        <position position="59"/>
    </location>
    <ligand>
        <name>O2</name>
        <dbReference type="ChEBI" id="CHEBI:15379"/>
    </ligand>
</feature>
<feature type="binding site" description="proximal binding residue" evidence="1">
    <location>
        <position position="88"/>
    </location>
    <ligand>
        <name>heme b</name>
        <dbReference type="ChEBI" id="CHEBI:60344"/>
    </ligand>
    <ligandPart>
        <name>Fe</name>
        <dbReference type="ChEBI" id="CHEBI:18248"/>
    </ligandPart>
</feature>
<feature type="sequence variant">
    <original>S</original>
    <variation>T</variation>
    <location>
        <position position="3"/>
    </location>
</feature>
<protein>
    <recommendedName>
        <fullName>Hemoglobin subunit alpha</fullName>
    </recommendedName>
    <alternativeName>
        <fullName>Alpha-globin</fullName>
    </alternativeName>
    <alternativeName>
        <fullName>Hemoglobin alpha chain</fullName>
    </alternativeName>
</protein>
<keyword id="KW-0903">Direct protein sequencing</keyword>
<keyword id="KW-0349">Heme</keyword>
<keyword id="KW-0408">Iron</keyword>
<keyword id="KW-0479">Metal-binding</keyword>
<keyword id="KW-0561">Oxygen transport</keyword>
<keyword id="KW-0813">Transport</keyword>
<accession>P07408</accession>